<sequence length="924" mass="104021">MSEIRVSCASSGVSVSAARDQFSSLPHLKAWIELEFSVSVSEQLLLTVAAEQVKMAHLGTQNELFVFDRSVVGGTVSNEHKYSAPKLKTLTPGTDPSQWALTVLTHCSRLVEETKRVTAEIATIKRATNVAITQMKQHSQNLDKNLLNVKEYSKELNQGITPLLSVDLAQLRDNTRAVKLVAPAVFGKKQFLNDWLDLQQLQSIVVEFKADFPSCMDKLQTLEQDLAQLSKDTQTLVNSTDVWIGGTNSDVLCNEAVGILRKLSELTSGDHVTNEAVKSVQNCQSQILDLHKALSKAKFQTVQHSQKVLQSISQLQSRSTKLKPKLTHIGSELTKYEEKRVQAMKQVDVEFVYGCVLVEMLRRTVWSQSGGENGSVKSEIGTRVAWKKQFQDTFPFVDILNEQEDLTIDTISTSSPSIVHNLVIARPVVTDYISQVSSKEVRNNLESLLGGVTGSAAATSSFPRSLFRNGSISGSLMAERAPISSATNADDKIRGYEARIRKLEDLLYKQRMSQDTSRWSVSPGTPSAGFAVVSPGQLSSEARGSSLSPEPTETREQVKAREKAEEEARKAEEERLARDKAAAEALQSKVDQLSQSLLHTENEKNDLMANLASMESDFSRERRCLVQEISELKLRVEELEEQVETAAETSIERHQRADQETEELEQRLKAMTLAQNTVDDENSRLKITLQDMSQRLYTGYKRNCVLLESLGLQAQKEYDADGSEVVSFDIHRVKGLRKKHRGKKGEKTEKDSESDSTDDFSALYWATKTTPDSFESSYRTFLARIFLDYDLYVEKVAKRFEDLEHLARKLQKEARNYRTMTQQLDDETRSKIALNRFKVGDLVLFLPTRDPSRQPQPWAAFNVGAPHFFLKQKPGRELKDRDWLVGRITGMEERVVNGGIGDREENPFDLGQGLRWWWLEAEEE</sequence>
<gene>
    <name type="primary">ATG11</name>
    <name type="ordered locus">YALI0B04598g</name>
</gene>
<evidence type="ECO:0000250" key="1"/>
<evidence type="ECO:0000255" key="2"/>
<evidence type="ECO:0000256" key="3">
    <source>
        <dbReference type="SAM" id="MobiDB-lite"/>
    </source>
</evidence>
<evidence type="ECO:0000305" key="4"/>
<name>ATG11_YARLI</name>
<protein>
    <recommendedName>
        <fullName>Autophagy-related protein 11</fullName>
    </recommendedName>
</protein>
<feature type="chain" id="PRO_0000124553" description="Autophagy-related protein 11">
    <location>
        <begin position="1"/>
        <end position="924"/>
    </location>
</feature>
<feature type="region of interest" description="Disordered" evidence="3">
    <location>
        <begin position="514"/>
        <end position="533"/>
    </location>
</feature>
<feature type="region of interest" description="Disordered" evidence="3">
    <location>
        <begin position="538"/>
        <end position="583"/>
    </location>
</feature>
<feature type="coiled-coil region" evidence="2">
    <location>
        <begin position="552"/>
        <end position="682"/>
    </location>
</feature>
<feature type="compositionally biased region" description="Polar residues" evidence="3">
    <location>
        <begin position="514"/>
        <end position="525"/>
    </location>
</feature>
<feature type="compositionally biased region" description="Polar residues" evidence="3">
    <location>
        <begin position="538"/>
        <end position="551"/>
    </location>
</feature>
<feature type="compositionally biased region" description="Basic and acidic residues" evidence="3">
    <location>
        <begin position="552"/>
        <end position="582"/>
    </location>
</feature>
<proteinExistence type="inferred from homology"/>
<organism>
    <name type="scientific">Yarrowia lipolytica (strain CLIB 122 / E 150)</name>
    <name type="common">Yeast</name>
    <name type="synonym">Candida lipolytica</name>
    <dbReference type="NCBI Taxonomy" id="284591"/>
    <lineage>
        <taxon>Eukaryota</taxon>
        <taxon>Fungi</taxon>
        <taxon>Dikarya</taxon>
        <taxon>Ascomycota</taxon>
        <taxon>Saccharomycotina</taxon>
        <taxon>Dipodascomycetes</taxon>
        <taxon>Dipodascales</taxon>
        <taxon>Dipodascales incertae sedis</taxon>
        <taxon>Yarrowia</taxon>
    </lineage>
</organism>
<keyword id="KW-0072">Autophagy</keyword>
<keyword id="KW-0175">Coiled coil</keyword>
<keyword id="KW-0472">Membrane</keyword>
<keyword id="KW-0653">Protein transport</keyword>
<keyword id="KW-1185">Reference proteome</keyword>
<keyword id="KW-0813">Transport</keyword>
<keyword id="KW-0926">Vacuole</keyword>
<reference key="1">
    <citation type="journal article" date="2004" name="Nature">
        <title>Genome evolution in yeasts.</title>
        <authorList>
            <person name="Dujon B."/>
            <person name="Sherman D."/>
            <person name="Fischer G."/>
            <person name="Durrens P."/>
            <person name="Casaregola S."/>
            <person name="Lafontaine I."/>
            <person name="de Montigny J."/>
            <person name="Marck C."/>
            <person name="Neuveglise C."/>
            <person name="Talla E."/>
            <person name="Goffard N."/>
            <person name="Frangeul L."/>
            <person name="Aigle M."/>
            <person name="Anthouard V."/>
            <person name="Babour A."/>
            <person name="Barbe V."/>
            <person name="Barnay S."/>
            <person name="Blanchin S."/>
            <person name="Beckerich J.-M."/>
            <person name="Beyne E."/>
            <person name="Bleykasten C."/>
            <person name="Boisrame A."/>
            <person name="Boyer J."/>
            <person name="Cattolico L."/>
            <person name="Confanioleri F."/>
            <person name="de Daruvar A."/>
            <person name="Despons L."/>
            <person name="Fabre E."/>
            <person name="Fairhead C."/>
            <person name="Ferry-Dumazet H."/>
            <person name="Groppi A."/>
            <person name="Hantraye F."/>
            <person name="Hennequin C."/>
            <person name="Jauniaux N."/>
            <person name="Joyet P."/>
            <person name="Kachouri R."/>
            <person name="Kerrest A."/>
            <person name="Koszul R."/>
            <person name="Lemaire M."/>
            <person name="Lesur I."/>
            <person name="Ma L."/>
            <person name="Muller H."/>
            <person name="Nicaud J.-M."/>
            <person name="Nikolski M."/>
            <person name="Oztas S."/>
            <person name="Ozier-Kalogeropoulos O."/>
            <person name="Pellenz S."/>
            <person name="Potier S."/>
            <person name="Richard G.-F."/>
            <person name="Straub M.-L."/>
            <person name="Suleau A."/>
            <person name="Swennen D."/>
            <person name="Tekaia F."/>
            <person name="Wesolowski-Louvel M."/>
            <person name="Westhof E."/>
            <person name="Wirth B."/>
            <person name="Zeniou-Meyer M."/>
            <person name="Zivanovic Y."/>
            <person name="Bolotin-Fukuhara M."/>
            <person name="Thierry A."/>
            <person name="Bouchier C."/>
            <person name="Caudron B."/>
            <person name="Scarpelli C."/>
            <person name="Gaillardin C."/>
            <person name="Weissenbach J."/>
            <person name="Wincker P."/>
            <person name="Souciet J.-L."/>
        </authorList>
    </citation>
    <scope>NUCLEOTIDE SEQUENCE [LARGE SCALE GENOMIC DNA]</scope>
    <source>
        <strain>CLIB 122 / E 150</strain>
    </source>
</reference>
<comment type="function">
    <text evidence="1">Involved in cytoplasm to vacuole transport (Cvt), pexophagy, mitophagy and nucleophagy. Recruits mitochondria for their selective degradation via autophagy (mitophagy) during starvation. Works as scaffold proteins that recruit ATG proteins to the pre-autophagosome (PAS), the site of vesicle/autophagosome formation. Required for the Cvt vesicles completion (By similarity).</text>
</comment>
<comment type="subunit">
    <text evidence="1">Homodimer.</text>
</comment>
<comment type="subcellular location">
    <subcellularLocation>
        <location evidence="1">Preautophagosomal structure membrane</location>
        <topology evidence="1">Peripheral membrane protein</topology>
    </subcellularLocation>
    <subcellularLocation>
        <location evidence="1">Vacuole membrane</location>
        <topology evidence="1">Peripheral membrane protein</topology>
    </subcellularLocation>
    <text evidence="1">During pexophagy, accumulates in the vacuolar membrane region, where the peroxisomes contact the vacuole.</text>
</comment>
<comment type="similarity">
    <text evidence="4">Belongs to the ATG11 family.</text>
</comment>
<accession>Q6CFR0</accession>
<dbReference type="EMBL" id="CR382128">
    <property type="protein sequence ID" value="CAG82729.1"/>
    <property type="molecule type" value="Genomic_DNA"/>
</dbReference>
<dbReference type="RefSeq" id="XP_500502.1">
    <property type="nucleotide sequence ID" value="XM_500502.1"/>
</dbReference>
<dbReference type="SMR" id="Q6CFR0"/>
<dbReference type="FunCoup" id="Q6CFR0">
    <property type="interactions" value="150"/>
</dbReference>
<dbReference type="STRING" id="284591.Q6CFR0"/>
<dbReference type="EnsemblFungi" id="CAG82729">
    <property type="protein sequence ID" value="CAG82729"/>
    <property type="gene ID" value="YALI0_B04598g"/>
</dbReference>
<dbReference type="KEGG" id="yli:2906710"/>
<dbReference type="VEuPathDB" id="FungiDB:YALI0_B04598g"/>
<dbReference type="HOGENOM" id="CLU_318616_0_0_1"/>
<dbReference type="InParanoid" id="Q6CFR0"/>
<dbReference type="OrthoDB" id="118490at4891"/>
<dbReference type="Proteomes" id="UP000001300">
    <property type="component" value="Chromosome B"/>
</dbReference>
<dbReference type="GO" id="GO:1990316">
    <property type="term" value="C:Atg1/ULK1 kinase complex"/>
    <property type="evidence" value="ECO:0000318"/>
    <property type="project" value="GO_Central"/>
</dbReference>
<dbReference type="GO" id="GO:0034045">
    <property type="term" value="C:phagophore assembly site membrane"/>
    <property type="evidence" value="ECO:0000318"/>
    <property type="project" value="GO_Central"/>
</dbReference>
<dbReference type="GO" id="GO:0005774">
    <property type="term" value="C:vacuolar membrane"/>
    <property type="evidence" value="ECO:0007669"/>
    <property type="project" value="UniProtKB-SubCell"/>
</dbReference>
<dbReference type="GO" id="GO:0060090">
    <property type="term" value="F:molecular adaptor activity"/>
    <property type="evidence" value="ECO:0000318"/>
    <property type="project" value="GO_Central"/>
</dbReference>
<dbReference type="GO" id="GO:0019901">
    <property type="term" value="F:protein kinase binding"/>
    <property type="evidence" value="ECO:0000318"/>
    <property type="project" value="GO_Central"/>
</dbReference>
<dbReference type="GO" id="GO:0000045">
    <property type="term" value="P:autophagosome assembly"/>
    <property type="evidence" value="ECO:0000318"/>
    <property type="project" value="GO_Central"/>
</dbReference>
<dbReference type="GO" id="GO:0000422">
    <property type="term" value="P:autophagy of mitochondrion"/>
    <property type="evidence" value="ECO:0000318"/>
    <property type="project" value="GO_Central"/>
</dbReference>
<dbReference type="GO" id="GO:0000425">
    <property type="term" value="P:pexophagy"/>
    <property type="evidence" value="ECO:0000318"/>
    <property type="project" value="GO_Central"/>
</dbReference>
<dbReference type="GO" id="GO:0034727">
    <property type="term" value="P:piecemeal microautophagy of the nucleus"/>
    <property type="evidence" value="ECO:0000318"/>
    <property type="project" value="GO_Central"/>
</dbReference>
<dbReference type="GO" id="GO:0015031">
    <property type="term" value="P:protein transport"/>
    <property type="evidence" value="ECO:0007669"/>
    <property type="project" value="UniProtKB-KW"/>
</dbReference>
<dbReference type="GO" id="GO:0061709">
    <property type="term" value="P:reticulophagy"/>
    <property type="evidence" value="ECO:0000318"/>
    <property type="project" value="GO_Central"/>
</dbReference>
<dbReference type="GO" id="GO:0034517">
    <property type="term" value="P:ribophagy"/>
    <property type="evidence" value="ECO:0000318"/>
    <property type="project" value="GO_Central"/>
</dbReference>
<dbReference type="InterPro" id="IPR040040">
    <property type="entry name" value="ATG11"/>
</dbReference>
<dbReference type="InterPro" id="IPR019460">
    <property type="entry name" value="Atg11_C"/>
</dbReference>
<dbReference type="InterPro" id="IPR045326">
    <property type="entry name" value="ATG17-like_dom"/>
</dbReference>
<dbReference type="PANTHER" id="PTHR13222">
    <property type="entry name" value="RB1-INDUCIBLE COILED-COIL"/>
    <property type="match status" value="1"/>
</dbReference>
<dbReference type="PANTHER" id="PTHR13222:SF1">
    <property type="entry name" value="RB1-INDUCIBLE COILED-COIL PROTEIN 1"/>
    <property type="match status" value="1"/>
</dbReference>
<dbReference type="Pfam" id="PF10377">
    <property type="entry name" value="ATG11"/>
    <property type="match status" value="1"/>
</dbReference>
<dbReference type="Pfam" id="PF04108">
    <property type="entry name" value="ATG17_like"/>
    <property type="match status" value="1"/>
</dbReference>